<organism>
    <name type="scientific">Homo sapiens</name>
    <name type="common">Human</name>
    <dbReference type="NCBI Taxonomy" id="9606"/>
    <lineage>
        <taxon>Eukaryota</taxon>
        <taxon>Metazoa</taxon>
        <taxon>Chordata</taxon>
        <taxon>Craniata</taxon>
        <taxon>Vertebrata</taxon>
        <taxon>Euteleostomi</taxon>
        <taxon>Mammalia</taxon>
        <taxon>Eutheria</taxon>
        <taxon>Euarchontoglires</taxon>
        <taxon>Primates</taxon>
        <taxon>Haplorrhini</taxon>
        <taxon>Catarrhini</taxon>
        <taxon>Hominidae</taxon>
        <taxon>Homo</taxon>
    </lineage>
</organism>
<comment type="function">
    <text evidence="11">Probable transporter which may play a role in macrophage lipid transport and homeostasis.</text>
</comment>
<comment type="subcellular location">
    <subcellularLocation>
        <location evidence="7">Golgi apparatus membrane</location>
        <topology evidence="10">Multi-pass membrane protein</topology>
    </subcellularLocation>
</comment>
<comment type="alternative products">
    <event type="alternative splicing"/>
    <isoform>
        <id>Q8N139-1</id>
        <name>1</name>
        <sequence type="displayed"/>
    </isoform>
    <isoform>
        <id>Q8N139-2</id>
        <name>2</name>
        <name>ABCA6delta-139</name>
        <sequence type="described" ref="VSP_020697 VSP_020698"/>
    </isoform>
    <isoform>
        <id>Q8N139-3</id>
        <name>3</name>
        <sequence type="described" ref="VSP_020695 VSP_020696"/>
    </isoform>
</comment>
<comment type="tissue specificity">
    <text evidence="4 8">Widely expressed with higher expression in liver.</text>
</comment>
<comment type="developmental stage">
    <text evidence="8">Expressed in fetal kidney, lung and liver.</text>
</comment>
<comment type="induction">
    <text evidence="3 7">Up-regulated during monocyte differentiation into macrophages (PubMed:10639163). Down-regulated by cholesterol loading of macrophages (PubMed:10639163, PubMed:24028821).</text>
</comment>
<comment type="similarity">
    <text evidence="10">Belongs to the ABC transporter superfamily. ABCA family.</text>
</comment>
<comment type="sequence caution" evidence="10">
    <conflict type="frameshift">
        <sequence resource="EMBL-CDS" id="AAM77557"/>
    </conflict>
</comment>
<comment type="sequence caution" evidence="10">
    <conflict type="frameshift">
        <sequence resource="EMBL-CDS" id="AAM77558"/>
    </conflict>
</comment>
<comment type="sequence caution" evidence="10">
    <conflict type="erroneous initiation">
        <sequence resource="EMBL-CDS" id="BAC04994"/>
    </conflict>
</comment>
<comment type="online information" name="ABCMdb">
    <link uri="http://abcm2.hegelab.org/search"/>
    <text>Database for mutations in ABC proteins</text>
</comment>
<sequence>MNMKQKSVYQQTKALLCKNFLKKWRMKRESLLEWGLSILLGLCIALFSSSMRNVQFPGMAPQNLGRVDKFNSSSLMVVYTPISNLTQQIMNKTALAPLLKGTSVIGAPNKTHMDEILLENLPYAMGIIFNETFSYKLIFFQGYNSPLWKEDFSAHCWDGYGEFSCTLTKYWNRGFVALQTAINTAIIEITTNHPVMEELMSVTAITMKTLPFITKNLLHNEMFILFFLLHFSPLVYFISLNVTKERKKSKNLMKMMGLQDSAFWLSWGLIYAGFIFIISIFVTIIITFTQIIVMTGFMVIFILFFLYGLSLVALVFLMSVLLKKAVLTNLVVFLLTLFWGCLGFTVFYEQLPSSLEWILNICSPFAFTTGMIQIIKLDYNLNGVIFPDPSGDSYTMIATFSMLLLDGLIYLLLALYFDKILPYGDERHYSPLFFLNSSSCFQHQRTNAKVIEKEIDAEHPSDDYFEPVAPEFQGKEAIRIRNVKKEYKGKSGKVEALKGLLFDIYEGQITAILGHSGAGKSSLLNILNGLSVPTEGSVTIYNKNLSEMQDLEEIRKITGVCPQFNVQFDILTVKENLSLFAKIKGIHLKEVEQEVQRILLELDMQNIQDNLAKHLSEGQKRKLTFGITILGDPQILLLDEPTTGLDPFSRDQVWSLLRERRADHVILFSTQSMDEADILADRKVIMSNGRLKCAGSSMFLKRRWGLGYHLSLHRNEICNPEQITSFITHHIPDAKLKTENKEKLVYTLPLERTNTFPDLFSDLDKCSDQGVTGYDISMSTLNEVFMKLEGQSTIEQDFEQVEMIRDSESLNEMELAHSSFSEMQTAVSDMGLWRMQVFAMARLRFLKLKRQTKVLLTLLLVFGIAIFPLIVENIMYAMLNEKIDWEFKNELYFLSPGQLPQEPRTSLLIINNTESNIEDFIKSLKHQNILLEVDDFENRNGTDGLSYNGAIIVSGKQKDYRFSVVCNTKRLHCFPILMNIISNGLLQMFNHTQHIRIESSPFPLSHIGLWTGLPDGSFFLFLVLCSISPYITMGSISDYKKNAKSQLWISGLYTSAYWCGQALVDVSFFILILLLMYLIFYIENMQYLLITSQIVFALVIVTPGYAASLVFFIYMISFIFRKRRKNSGLWSFYFFFASTIMFSITLINHFDLSILITTMVLVPSYTLLGFKTFLEVRDQEHYREFPEANFELSATDFLVCFIPYFQTLLFVFVLRCMELKCGKKRMRKDPVFRISPQSRDAKPNPEEPIDEDEDIQTERIRTATALTTSILDEKPVIIASCLHKEYAGQKKSCFSKRKKKIAARNISFCVQEGEILGLLGPNGAGKSSSIRMISGITKPTAGEVELKGCSSVLGHLGYCPQENVLWPMLTLREHLEVYAAVKGLRKADARLAIARLVSAFKLHEQLNVPVQKLTAGITRKLCFVLSLLGNSPVLLLDEPSTGIDPTGQQQMWQAIQAVVKNTERGVLLTTHNLAEAEALCDRVAIMVSGRLRCIGSIQHLKNKLGKDYILELKVKETSQVTLVHTEILKLFPQAAGQERYSSLLTYKLPVADVYPLSQTFHKLEAVKHNFNLEEYSLSQCTLEKVFLELSKEQEVGNFDEEIDTTMRWKLLPHSDEP</sequence>
<gene>
    <name type="primary">ABCA6</name>
</gene>
<keyword id="KW-0025">Alternative splicing</keyword>
<keyword id="KW-0067">ATP-binding</keyword>
<keyword id="KW-0325">Glycoprotein</keyword>
<keyword id="KW-0333">Golgi apparatus</keyword>
<keyword id="KW-0472">Membrane</keyword>
<keyword id="KW-0547">Nucleotide-binding</keyword>
<keyword id="KW-1267">Proteomics identification</keyword>
<keyword id="KW-1185">Reference proteome</keyword>
<keyword id="KW-0677">Repeat</keyword>
<keyword id="KW-1278">Translocase</keyword>
<keyword id="KW-0812">Transmembrane</keyword>
<keyword id="KW-1133">Transmembrane helix</keyword>
<keyword id="KW-0813">Transport</keyword>
<feature type="chain" id="PRO_0000250672" description="ATP-binding cassette sub-family A member 6">
    <location>
        <begin position="1"/>
        <end position="1617"/>
    </location>
</feature>
<feature type="transmembrane region" description="Helical" evidence="1">
    <location>
        <begin position="31"/>
        <end position="51"/>
    </location>
</feature>
<feature type="transmembrane region" description="Helical" evidence="1">
    <location>
        <begin position="222"/>
        <end position="242"/>
    </location>
</feature>
<feature type="transmembrane region" description="Helical" evidence="1">
    <location>
        <begin position="268"/>
        <end position="288"/>
    </location>
</feature>
<feature type="transmembrane region" description="Helical" evidence="1">
    <location>
        <begin position="297"/>
        <end position="317"/>
    </location>
</feature>
<feature type="transmembrane region" description="Helical" evidence="1">
    <location>
        <begin position="327"/>
        <end position="347"/>
    </location>
</feature>
<feature type="transmembrane region" description="Helical" evidence="1">
    <location>
        <begin position="355"/>
        <end position="375"/>
    </location>
</feature>
<feature type="transmembrane region" description="Helical" evidence="1">
    <location>
        <begin position="397"/>
        <end position="417"/>
    </location>
</feature>
<feature type="transmembrane region" description="Helical" evidence="1">
    <location>
        <begin position="854"/>
        <end position="874"/>
    </location>
</feature>
<feature type="transmembrane region" description="Helical" evidence="1">
    <location>
        <begin position="1007"/>
        <end position="1027"/>
    </location>
</feature>
<feature type="transmembrane region" description="Helical" evidence="1">
    <location>
        <begin position="1062"/>
        <end position="1082"/>
    </location>
</feature>
<feature type="transmembrane region" description="Helical" evidence="1">
    <location>
        <begin position="1094"/>
        <end position="1114"/>
    </location>
</feature>
<feature type="transmembrane region" description="Helical" evidence="1">
    <location>
        <begin position="1127"/>
        <end position="1147"/>
    </location>
</feature>
<feature type="transmembrane region" description="Helical" evidence="1">
    <location>
        <begin position="1150"/>
        <end position="1170"/>
    </location>
</feature>
<feature type="transmembrane region" description="Helical" evidence="1">
    <location>
        <begin position="1194"/>
        <end position="1214"/>
    </location>
</feature>
<feature type="domain" description="ABC transporter 1" evidence="2">
    <location>
        <begin position="478"/>
        <end position="713"/>
    </location>
</feature>
<feature type="domain" description="ABC transporter 2" evidence="2">
    <location>
        <begin position="1288"/>
        <end position="1513"/>
    </location>
</feature>
<feature type="binding site" evidence="2">
    <location>
        <begin position="514"/>
        <end position="521"/>
    </location>
    <ligand>
        <name>ATP</name>
        <dbReference type="ChEBI" id="CHEBI:30616"/>
        <label>1</label>
    </ligand>
</feature>
<feature type="binding site" evidence="2">
    <location>
        <begin position="1320"/>
        <end position="1327"/>
    </location>
    <ligand>
        <name>ATP</name>
        <dbReference type="ChEBI" id="CHEBI:30616"/>
        <label>2</label>
    </ligand>
</feature>
<feature type="glycosylation site" description="N-linked (GlcNAc...) asparagine" evidence="1">
    <location>
        <position position="84"/>
    </location>
</feature>
<feature type="glycosylation site" description="N-linked (GlcNAc...) asparagine" evidence="1">
    <location>
        <position position="109"/>
    </location>
</feature>
<feature type="glycosylation site" description="N-linked (GlcNAc...) asparagine" evidence="6">
    <location>
        <position position="940"/>
    </location>
</feature>
<feature type="splice variant" id="VSP_020695" description="In isoform 3." evidence="9">
    <original>AHCWDGYGEFSCTLTKYWNRGFVALQTAINTA</original>
    <variation>GDFPYQISLWNFSCFQHKEQRRLGNRDAFNDT</variation>
    <location>
        <begin position="154"/>
        <end position="185"/>
    </location>
</feature>
<feature type="splice variant" id="VSP_020696" description="In isoform 3." evidence="9">
    <location>
        <begin position="186"/>
        <end position="1617"/>
    </location>
</feature>
<feature type="splice variant" id="VSP_020697" description="In isoform 2." evidence="10">
    <original>LL</original>
    <variation>EK</variation>
    <location>
        <begin position="636"/>
        <end position="637"/>
    </location>
</feature>
<feature type="splice variant" id="VSP_020698" description="In isoform 2." evidence="10">
    <location>
        <begin position="638"/>
        <end position="1617"/>
    </location>
</feature>
<feature type="sequence variant" id="VAR_027576" description="In dbSNP:rs4968839." evidence="8">
    <original>V</original>
    <variation>I</variation>
    <location>
        <position position="282"/>
    </location>
</feature>
<feature type="sequence variant" id="VAR_027577" description="In dbSNP:rs9282554.">
    <original>N</original>
    <variation>Y</variation>
    <location>
        <position position="610"/>
    </location>
</feature>
<feature type="sequence variant" id="VAR_027578" description="In dbSNP:rs9282553.">
    <original>M</original>
    <variation>I</variation>
    <location>
        <position position="698"/>
    </location>
</feature>
<feature type="sequence variant" id="VAR_027579" description="In dbSNP:rs7212506." evidence="8">
    <original>M</original>
    <variation>I</variation>
    <location>
        <position position="875"/>
    </location>
</feature>
<feature type="sequence variant" id="VAR_027580" description="In dbSNP:rs2302134." evidence="5 8">
    <original>N</original>
    <variation>S</variation>
    <location>
        <position position="1322"/>
    </location>
</feature>
<feature type="sequence conflict" description="In Ref. 3; AAH70125." evidence="10" ref="3">
    <original>M</original>
    <variation>L</variation>
    <location>
        <position position="51"/>
    </location>
</feature>
<feature type="sequence conflict" description="In Ref. 3; AAH70125." evidence="10" ref="3">
    <original>L</original>
    <variation>R</variation>
    <location>
        <position position="147"/>
    </location>
</feature>
<feature type="sequence conflict" description="In Ref. 4; BAC04994." evidence="10" ref="4">
    <original>E</original>
    <variation>G</variation>
    <location>
        <position position="812"/>
    </location>
</feature>
<feature type="sequence conflict" description="In Ref. 4; BAC04994." evidence="10" ref="4">
    <original>MY</original>
    <variation>IH</variation>
    <location>
        <begin position="875"/>
        <end position="876"/>
    </location>
</feature>
<dbReference type="EC" id="7.6.2.-" evidence="11"/>
<dbReference type="EMBL" id="AF373290">
    <property type="protein sequence ID" value="AAM77557.1"/>
    <property type="status" value="ALT_FRAME"/>
    <property type="molecule type" value="mRNA"/>
</dbReference>
<dbReference type="EMBL" id="AF373328">
    <property type="protein sequence ID" value="AAM77558.1"/>
    <property type="status" value="ALT_FRAME"/>
    <property type="molecule type" value="Genomic_DNA"/>
</dbReference>
<dbReference type="EMBL" id="AF373291">
    <property type="protein sequence ID" value="AAM77558.1"/>
    <property type="status" value="JOINED"/>
    <property type="molecule type" value="Genomic_DNA"/>
</dbReference>
<dbReference type="EMBL" id="AF373292">
    <property type="protein sequence ID" value="AAM77558.1"/>
    <property type="status" value="JOINED"/>
    <property type="molecule type" value="Genomic_DNA"/>
</dbReference>
<dbReference type="EMBL" id="AF373293">
    <property type="protein sequence ID" value="AAM77558.1"/>
    <property type="status" value="JOINED"/>
    <property type="molecule type" value="Genomic_DNA"/>
</dbReference>
<dbReference type="EMBL" id="AF373294">
    <property type="protein sequence ID" value="AAM77558.1"/>
    <property type="status" value="JOINED"/>
    <property type="molecule type" value="Genomic_DNA"/>
</dbReference>
<dbReference type="EMBL" id="AF373295">
    <property type="protein sequence ID" value="AAM77558.1"/>
    <property type="status" value="JOINED"/>
    <property type="molecule type" value="Genomic_DNA"/>
</dbReference>
<dbReference type="EMBL" id="AF373296">
    <property type="protein sequence ID" value="AAM77558.1"/>
    <property type="status" value="JOINED"/>
    <property type="molecule type" value="Genomic_DNA"/>
</dbReference>
<dbReference type="EMBL" id="AF373297">
    <property type="protein sequence ID" value="AAM77558.1"/>
    <property type="status" value="JOINED"/>
    <property type="molecule type" value="Genomic_DNA"/>
</dbReference>
<dbReference type="EMBL" id="AF373298">
    <property type="protein sequence ID" value="AAM77558.1"/>
    <property type="status" value="JOINED"/>
    <property type="molecule type" value="Genomic_DNA"/>
</dbReference>
<dbReference type="EMBL" id="AF373299">
    <property type="protein sequence ID" value="AAM77558.1"/>
    <property type="status" value="JOINED"/>
    <property type="molecule type" value="Genomic_DNA"/>
</dbReference>
<dbReference type="EMBL" id="AF373300">
    <property type="protein sequence ID" value="AAM77558.1"/>
    <property type="status" value="JOINED"/>
    <property type="molecule type" value="Genomic_DNA"/>
</dbReference>
<dbReference type="EMBL" id="AF373301">
    <property type="protein sequence ID" value="AAM77558.1"/>
    <property type="status" value="JOINED"/>
    <property type="molecule type" value="Genomic_DNA"/>
</dbReference>
<dbReference type="EMBL" id="AF373302">
    <property type="protein sequence ID" value="AAM77558.1"/>
    <property type="status" value="JOINED"/>
    <property type="molecule type" value="Genomic_DNA"/>
</dbReference>
<dbReference type="EMBL" id="AF373303">
    <property type="protein sequence ID" value="AAM77558.1"/>
    <property type="status" value="JOINED"/>
    <property type="molecule type" value="Genomic_DNA"/>
</dbReference>
<dbReference type="EMBL" id="AF373304">
    <property type="protein sequence ID" value="AAM77558.1"/>
    <property type="status" value="JOINED"/>
    <property type="molecule type" value="Genomic_DNA"/>
</dbReference>
<dbReference type="EMBL" id="AF373305">
    <property type="protein sequence ID" value="AAM77558.1"/>
    <property type="status" value="JOINED"/>
    <property type="molecule type" value="Genomic_DNA"/>
</dbReference>
<dbReference type="EMBL" id="AF373306">
    <property type="protein sequence ID" value="AAM77558.1"/>
    <property type="status" value="JOINED"/>
    <property type="molecule type" value="Genomic_DNA"/>
</dbReference>
<dbReference type="EMBL" id="AF373307">
    <property type="protein sequence ID" value="AAM77558.1"/>
    <property type="status" value="JOINED"/>
    <property type="molecule type" value="Genomic_DNA"/>
</dbReference>
<dbReference type="EMBL" id="AF373308">
    <property type="protein sequence ID" value="AAM77558.1"/>
    <property type="status" value="JOINED"/>
    <property type="molecule type" value="Genomic_DNA"/>
</dbReference>
<dbReference type="EMBL" id="AF373309">
    <property type="protein sequence ID" value="AAM77558.1"/>
    <property type="status" value="JOINED"/>
    <property type="molecule type" value="Genomic_DNA"/>
</dbReference>
<dbReference type="EMBL" id="AF373310">
    <property type="protein sequence ID" value="AAM77558.1"/>
    <property type="status" value="JOINED"/>
    <property type="molecule type" value="Genomic_DNA"/>
</dbReference>
<dbReference type="EMBL" id="AF373311">
    <property type="protein sequence ID" value="AAM77558.1"/>
    <property type="status" value="JOINED"/>
    <property type="molecule type" value="Genomic_DNA"/>
</dbReference>
<dbReference type="EMBL" id="AF373312">
    <property type="protein sequence ID" value="AAM77558.1"/>
    <property type="status" value="JOINED"/>
    <property type="molecule type" value="Genomic_DNA"/>
</dbReference>
<dbReference type="EMBL" id="AF373313">
    <property type="protein sequence ID" value="AAM77558.1"/>
    <property type="status" value="JOINED"/>
    <property type="molecule type" value="Genomic_DNA"/>
</dbReference>
<dbReference type="EMBL" id="AF373314">
    <property type="protein sequence ID" value="AAM77558.1"/>
    <property type="status" value="JOINED"/>
    <property type="molecule type" value="Genomic_DNA"/>
</dbReference>
<dbReference type="EMBL" id="AF373315">
    <property type="protein sequence ID" value="AAM77558.1"/>
    <property type="status" value="JOINED"/>
    <property type="molecule type" value="Genomic_DNA"/>
</dbReference>
<dbReference type="EMBL" id="AF373316">
    <property type="protein sequence ID" value="AAM77558.1"/>
    <property type="status" value="JOINED"/>
    <property type="molecule type" value="Genomic_DNA"/>
</dbReference>
<dbReference type="EMBL" id="AF373317">
    <property type="protein sequence ID" value="AAM77558.1"/>
    <property type="status" value="JOINED"/>
    <property type="molecule type" value="Genomic_DNA"/>
</dbReference>
<dbReference type="EMBL" id="AF373318">
    <property type="protein sequence ID" value="AAM77558.1"/>
    <property type="status" value="JOINED"/>
    <property type="molecule type" value="Genomic_DNA"/>
</dbReference>
<dbReference type="EMBL" id="AF373319">
    <property type="protein sequence ID" value="AAM77558.1"/>
    <property type="status" value="JOINED"/>
    <property type="molecule type" value="Genomic_DNA"/>
</dbReference>
<dbReference type="EMBL" id="AF373320">
    <property type="protein sequence ID" value="AAM77558.1"/>
    <property type="status" value="JOINED"/>
    <property type="molecule type" value="Genomic_DNA"/>
</dbReference>
<dbReference type="EMBL" id="AF373321">
    <property type="protein sequence ID" value="AAM77558.1"/>
    <property type="status" value="JOINED"/>
    <property type="molecule type" value="Genomic_DNA"/>
</dbReference>
<dbReference type="EMBL" id="AF373322">
    <property type="protein sequence ID" value="AAM77558.1"/>
    <property type="status" value="JOINED"/>
    <property type="molecule type" value="Genomic_DNA"/>
</dbReference>
<dbReference type="EMBL" id="AF373323">
    <property type="protein sequence ID" value="AAM77558.1"/>
    <property type="status" value="JOINED"/>
    <property type="molecule type" value="Genomic_DNA"/>
</dbReference>
<dbReference type="EMBL" id="AF373324">
    <property type="protein sequence ID" value="AAM77558.1"/>
    <property type="status" value="JOINED"/>
    <property type="molecule type" value="Genomic_DNA"/>
</dbReference>
<dbReference type="EMBL" id="AF373325">
    <property type="protein sequence ID" value="AAM77558.1"/>
    <property type="status" value="JOINED"/>
    <property type="molecule type" value="Genomic_DNA"/>
</dbReference>
<dbReference type="EMBL" id="AF373326">
    <property type="protein sequence ID" value="AAM77558.1"/>
    <property type="status" value="JOINED"/>
    <property type="molecule type" value="Genomic_DNA"/>
</dbReference>
<dbReference type="EMBL" id="AF373327">
    <property type="protein sequence ID" value="AAM77558.1"/>
    <property type="status" value="JOINED"/>
    <property type="molecule type" value="Genomic_DNA"/>
</dbReference>
<dbReference type="EMBL" id="AY028898">
    <property type="protein sequence ID" value="AAK30023.1"/>
    <property type="molecule type" value="mRNA"/>
</dbReference>
<dbReference type="EMBL" id="BC070125">
    <property type="protein sequence ID" value="AAH70125.1"/>
    <property type="molecule type" value="mRNA"/>
</dbReference>
<dbReference type="EMBL" id="AK097296">
    <property type="protein sequence ID" value="BAC04994.1"/>
    <property type="status" value="ALT_INIT"/>
    <property type="molecule type" value="mRNA"/>
</dbReference>
<dbReference type="CCDS" id="CCDS11683.1">
    <molecule id="Q8N139-1"/>
</dbReference>
<dbReference type="RefSeq" id="NP_525023.2">
    <molecule id="Q8N139-1"/>
    <property type="nucleotide sequence ID" value="NM_080284.2"/>
</dbReference>
<dbReference type="RefSeq" id="XP_016879893.1">
    <property type="nucleotide sequence ID" value="XM_017024404.1"/>
</dbReference>
<dbReference type="RefSeq" id="XP_016879894.1">
    <property type="nucleotide sequence ID" value="XM_017024405.1"/>
</dbReference>
<dbReference type="SMR" id="Q8N139"/>
<dbReference type="BioGRID" id="117023">
    <property type="interactions" value="9"/>
</dbReference>
<dbReference type="FunCoup" id="Q8N139">
    <property type="interactions" value="115"/>
</dbReference>
<dbReference type="IntAct" id="Q8N139">
    <property type="interactions" value="9"/>
</dbReference>
<dbReference type="STRING" id="9606.ENSP00000284425"/>
<dbReference type="TCDB" id="3.A.1.211.15">
    <property type="family name" value="the atp-binding cassette (abc) superfamily"/>
</dbReference>
<dbReference type="GlyCosmos" id="Q8N139">
    <property type="glycosylation" value="3 sites, No reported glycans"/>
</dbReference>
<dbReference type="GlyGen" id="Q8N139">
    <property type="glycosylation" value="5 sites, 4 N-linked glycans (2 sites)"/>
</dbReference>
<dbReference type="iPTMnet" id="Q8N139"/>
<dbReference type="PhosphoSitePlus" id="Q8N139"/>
<dbReference type="SwissPalm" id="Q8N139"/>
<dbReference type="BioMuta" id="ABCA6"/>
<dbReference type="DMDM" id="115503764"/>
<dbReference type="jPOST" id="Q8N139"/>
<dbReference type="MassIVE" id="Q8N139"/>
<dbReference type="PaxDb" id="9606-ENSP00000284425"/>
<dbReference type="PeptideAtlas" id="Q8N139"/>
<dbReference type="ProteomicsDB" id="71545">
    <molecule id="Q8N139-1"/>
</dbReference>
<dbReference type="ProteomicsDB" id="71546">
    <molecule id="Q8N139-2"/>
</dbReference>
<dbReference type="ProteomicsDB" id="71547">
    <molecule id="Q8N139-3"/>
</dbReference>
<dbReference type="TopDownProteomics" id="Q8N139-3">
    <molecule id="Q8N139-3"/>
</dbReference>
<dbReference type="Antibodypedia" id="31832">
    <property type="antibodies" value="166 antibodies from 27 providers"/>
</dbReference>
<dbReference type="DNASU" id="23460"/>
<dbReference type="Ensembl" id="ENST00000284425.7">
    <molecule id="Q8N139-1"/>
    <property type="protein sequence ID" value="ENSP00000284425.1"/>
    <property type="gene ID" value="ENSG00000154262.13"/>
</dbReference>
<dbReference type="Ensembl" id="ENST00000590645.1">
    <molecule id="Q8N139-3"/>
    <property type="protein sequence ID" value="ENSP00000466862.1"/>
    <property type="gene ID" value="ENSG00000154262.13"/>
</dbReference>
<dbReference type="GeneID" id="23460"/>
<dbReference type="KEGG" id="hsa:23460"/>
<dbReference type="MANE-Select" id="ENST00000284425.7">
    <property type="protein sequence ID" value="ENSP00000284425.1"/>
    <property type="RefSeq nucleotide sequence ID" value="NM_080284.3"/>
    <property type="RefSeq protein sequence ID" value="NP_525023.2"/>
</dbReference>
<dbReference type="UCSC" id="uc002jhw.2">
    <molecule id="Q8N139-1"/>
    <property type="organism name" value="human"/>
</dbReference>
<dbReference type="AGR" id="HGNC:36"/>
<dbReference type="CTD" id="23460"/>
<dbReference type="DisGeNET" id="23460"/>
<dbReference type="GeneCards" id="ABCA6"/>
<dbReference type="HGNC" id="HGNC:36">
    <property type="gene designation" value="ABCA6"/>
</dbReference>
<dbReference type="HPA" id="ENSG00000154262">
    <property type="expression patterns" value="Tissue enhanced (liver)"/>
</dbReference>
<dbReference type="MIM" id="612504">
    <property type="type" value="gene"/>
</dbReference>
<dbReference type="neXtProt" id="NX_Q8N139"/>
<dbReference type="OpenTargets" id="ENSG00000154262"/>
<dbReference type="PharmGKB" id="PA24381"/>
<dbReference type="VEuPathDB" id="HostDB:ENSG00000154262"/>
<dbReference type="eggNOG" id="KOG0059">
    <property type="taxonomic scope" value="Eukaryota"/>
</dbReference>
<dbReference type="GeneTree" id="ENSGT00940000162244"/>
<dbReference type="HOGENOM" id="CLU_000604_19_1_1"/>
<dbReference type="InParanoid" id="Q8N139"/>
<dbReference type="OMA" id="ITSQIVF"/>
<dbReference type="OrthoDB" id="8061355at2759"/>
<dbReference type="PAN-GO" id="Q8N139">
    <property type="GO annotations" value="4 GO annotations based on evolutionary models"/>
</dbReference>
<dbReference type="PhylomeDB" id="Q8N139"/>
<dbReference type="TreeFam" id="TF105192"/>
<dbReference type="PathwayCommons" id="Q8N139"/>
<dbReference type="Reactome" id="R-HSA-1369062">
    <property type="pathway name" value="ABC transporters in lipid homeostasis"/>
</dbReference>
<dbReference type="Reactome" id="R-HSA-9615017">
    <property type="pathway name" value="FOXO-mediated transcription of oxidative stress, metabolic and neuronal genes"/>
</dbReference>
<dbReference type="SignaLink" id="Q8N139"/>
<dbReference type="BioGRID-ORCS" id="23460">
    <property type="hits" value="26 hits in 1153 CRISPR screens"/>
</dbReference>
<dbReference type="ChiTaRS" id="ABCA6">
    <property type="organism name" value="human"/>
</dbReference>
<dbReference type="GenomeRNAi" id="23460"/>
<dbReference type="Pharos" id="Q8N139">
    <property type="development level" value="Tbio"/>
</dbReference>
<dbReference type="PRO" id="PR:Q8N139"/>
<dbReference type="Proteomes" id="UP000005640">
    <property type="component" value="Chromosome 17"/>
</dbReference>
<dbReference type="RNAct" id="Q8N139">
    <property type="molecule type" value="protein"/>
</dbReference>
<dbReference type="Bgee" id="ENSG00000154262">
    <property type="expression patterns" value="Expressed in calcaneal tendon and 129 other cell types or tissues"/>
</dbReference>
<dbReference type="GO" id="GO:0000139">
    <property type="term" value="C:Golgi membrane"/>
    <property type="evidence" value="ECO:0000314"/>
    <property type="project" value="UniProtKB"/>
</dbReference>
<dbReference type="GO" id="GO:0043231">
    <property type="term" value="C:intracellular membrane-bounded organelle"/>
    <property type="evidence" value="ECO:0000318"/>
    <property type="project" value="GO_Central"/>
</dbReference>
<dbReference type="GO" id="GO:0005654">
    <property type="term" value="C:nucleoplasm"/>
    <property type="evidence" value="ECO:0000314"/>
    <property type="project" value="HPA"/>
</dbReference>
<dbReference type="GO" id="GO:0005886">
    <property type="term" value="C:plasma membrane"/>
    <property type="evidence" value="ECO:0000314"/>
    <property type="project" value="ARUK-UCL"/>
</dbReference>
<dbReference type="GO" id="GO:0140359">
    <property type="term" value="F:ABC-type transporter activity"/>
    <property type="evidence" value="ECO:0007669"/>
    <property type="project" value="InterPro"/>
</dbReference>
<dbReference type="GO" id="GO:0005524">
    <property type="term" value="F:ATP binding"/>
    <property type="evidence" value="ECO:0007669"/>
    <property type="project" value="UniProtKB-KW"/>
</dbReference>
<dbReference type="GO" id="GO:0016887">
    <property type="term" value="F:ATP hydrolysis activity"/>
    <property type="evidence" value="ECO:0007669"/>
    <property type="project" value="InterPro"/>
</dbReference>
<dbReference type="GO" id="GO:0042626">
    <property type="term" value="F:ATPase-coupled transmembrane transporter activity"/>
    <property type="evidence" value="ECO:0000318"/>
    <property type="project" value="GO_Central"/>
</dbReference>
<dbReference type="GO" id="GO:0005319">
    <property type="term" value="F:lipid transporter activity"/>
    <property type="evidence" value="ECO:0000318"/>
    <property type="project" value="GO_Central"/>
</dbReference>
<dbReference type="GO" id="GO:0006869">
    <property type="term" value="P:lipid transport"/>
    <property type="evidence" value="ECO:0000318"/>
    <property type="project" value="GO_Central"/>
</dbReference>
<dbReference type="CDD" id="cd03263">
    <property type="entry name" value="ABC_subfamily_A"/>
    <property type="match status" value="2"/>
</dbReference>
<dbReference type="FunFam" id="3.40.50.300:FF:000335">
    <property type="entry name" value="ATP binding cassette subfamily A member 5"/>
    <property type="match status" value="1"/>
</dbReference>
<dbReference type="FunFam" id="3.40.50.300:FF:000436">
    <property type="entry name" value="ATP binding cassette subfamily A member 9"/>
    <property type="match status" value="1"/>
</dbReference>
<dbReference type="Gene3D" id="3.40.50.300">
    <property type="entry name" value="P-loop containing nucleotide triphosphate hydrolases"/>
    <property type="match status" value="2"/>
</dbReference>
<dbReference type="InterPro" id="IPR003593">
    <property type="entry name" value="AAA+_ATPase"/>
</dbReference>
<dbReference type="InterPro" id="IPR013525">
    <property type="entry name" value="ABC2_TM"/>
</dbReference>
<dbReference type="InterPro" id="IPR003439">
    <property type="entry name" value="ABC_transporter-like_ATP-bd"/>
</dbReference>
<dbReference type="InterPro" id="IPR026082">
    <property type="entry name" value="ABCA"/>
</dbReference>
<dbReference type="InterPro" id="IPR027417">
    <property type="entry name" value="P-loop_NTPase"/>
</dbReference>
<dbReference type="InterPro" id="IPR056264">
    <property type="entry name" value="R2_ABCA1-4-like"/>
</dbReference>
<dbReference type="PANTHER" id="PTHR19229:SF13">
    <property type="entry name" value="ATP-BINDING CASSETTE SUB-FAMILY A MEMBER 6"/>
    <property type="match status" value="1"/>
</dbReference>
<dbReference type="PANTHER" id="PTHR19229">
    <property type="entry name" value="ATP-BINDING CASSETTE TRANSPORTER SUBFAMILY A ABCA"/>
    <property type="match status" value="1"/>
</dbReference>
<dbReference type="Pfam" id="PF12698">
    <property type="entry name" value="ABC2_membrane_3"/>
    <property type="match status" value="2"/>
</dbReference>
<dbReference type="Pfam" id="PF00005">
    <property type="entry name" value="ABC_tran"/>
    <property type="match status" value="2"/>
</dbReference>
<dbReference type="Pfam" id="PF23321">
    <property type="entry name" value="R1_ABCA1"/>
    <property type="match status" value="1"/>
</dbReference>
<dbReference type="SMART" id="SM00382">
    <property type="entry name" value="AAA"/>
    <property type="match status" value="2"/>
</dbReference>
<dbReference type="SUPFAM" id="SSF52540">
    <property type="entry name" value="P-loop containing nucleoside triphosphate hydrolases"/>
    <property type="match status" value="2"/>
</dbReference>
<dbReference type="PROSITE" id="PS50893">
    <property type="entry name" value="ABC_TRANSPORTER_2"/>
    <property type="match status" value="2"/>
</dbReference>
<proteinExistence type="evidence at protein level"/>
<accession>Q8N139</accession>
<accession>Q6NSH9</accession>
<accession>Q8N856</accession>
<accession>Q8WWZ6</accession>
<name>ABCA6_HUMAN</name>
<evidence type="ECO:0000255" key="1"/>
<evidence type="ECO:0000255" key="2">
    <source>
        <dbReference type="PROSITE-ProRule" id="PRU00434"/>
    </source>
</evidence>
<evidence type="ECO:0000269" key="3">
    <source>
    </source>
</evidence>
<evidence type="ECO:0000269" key="4">
    <source>
    </source>
</evidence>
<evidence type="ECO:0000269" key="5">
    <source>
    </source>
</evidence>
<evidence type="ECO:0000269" key="6">
    <source>
    </source>
</evidence>
<evidence type="ECO:0000269" key="7">
    <source>
    </source>
</evidence>
<evidence type="ECO:0000269" key="8">
    <source ref="2"/>
</evidence>
<evidence type="ECO:0000303" key="9">
    <source>
    </source>
</evidence>
<evidence type="ECO:0000305" key="10"/>
<evidence type="ECO:0000305" key="11">
    <source>
    </source>
</evidence>
<protein>
    <recommendedName>
        <fullName evidence="10">ATP-binding cassette sub-family A member 6</fullName>
        <ecNumber evidence="11">7.6.2.-</ecNumber>
    </recommendedName>
</protein>
<reference key="1">
    <citation type="journal article" date="2001" name="Biochem. Biophys. Res. Commun.">
        <title>ABCA6, a novel A subclass ABC transporter.</title>
        <authorList>
            <person name="Kaminski W.E."/>
            <person name="Wenzel J.J."/>
            <person name="Piehler A."/>
            <person name="Langmann T."/>
            <person name="Schmitz G."/>
        </authorList>
    </citation>
    <scope>NUCLEOTIDE SEQUENCE [GENOMIC DNA / MRNA] (ISOFORM 1)</scope>
    <scope>ALTERNATIVE SPLICING (ISOFORM 2)</scope>
    <scope>TISSUE SPECIFICITY</scope>
    <source>
        <tissue>Macrophage</tissue>
    </source>
</reference>
<reference key="2">
    <citation type="journal article" date="2001" name="GeneScreen">
        <title>Identifying and characterizing a five-gene cluster of ATP-binding cassette transporters mapping to human chromosome 17q24: a new subgroup within the ABCA subfamily.</title>
        <authorList>
            <person name="Arnould I."/>
            <person name="Schriml L.M."/>
            <person name="Prades C."/>
            <person name="Lachtermacher-Triunfol M."/>
            <person name="Schneider T."/>
            <person name="Maintoux C."/>
            <person name="Lemoine C."/>
            <person name="Debono D."/>
            <person name="Devaud C."/>
            <person name="Naudin L."/>
            <person name="Bauche S."/>
            <person name="Annat M."/>
            <person name="Annilo T."/>
            <person name="Allikmets R."/>
            <person name="Gold B."/>
            <person name="Denefle P."/>
            <person name="Rosier M."/>
            <person name="Dean M."/>
        </authorList>
    </citation>
    <scope>NUCLEOTIDE SEQUENCE [MRNA] (ISOFORM 1)</scope>
    <scope>DEVELOPMENTAL STAGE</scope>
    <scope>TISSUE SPECIFICITY</scope>
    <scope>VARIANTS ILE-282; ILE-875 AND SER-1322</scope>
</reference>
<reference key="3">
    <citation type="journal article" date="2004" name="Genome Res.">
        <title>The status, quality, and expansion of the NIH full-length cDNA project: the Mammalian Gene Collection (MGC).</title>
        <authorList>
            <consortium name="The MGC Project Team"/>
        </authorList>
    </citation>
    <scope>NUCLEOTIDE SEQUENCE [LARGE SCALE MRNA] (ISOFORM 3)</scope>
    <source>
        <tissue>Lung</tissue>
    </source>
</reference>
<reference key="4">
    <citation type="journal article" date="2004" name="Nat. Genet.">
        <title>Complete sequencing and characterization of 21,243 full-length human cDNAs.</title>
        <authorList>
            <person name="Ota T."/>
            <person name="Suzuki Y."/>
            <person name="Nishikawa T."/>
            <person name="Otsuki T."/>
            <person name="Sugiyama T."/>
            <person name="Irie R."/>
            <person name="Wakamatsu A."/>
            <person name="Hayashi K."/>
            <person name="Sato H."/>
            <person name="Nagai K."/>
            <person name="Kimura K."/>
            <person name="Makita H."/>
            <person name="Sekine M."/>
            <person name="Obayashi M."/>
            <person name="Nishi T."/>
            <person name="Shibahara T."/>
            <person name="Tanaka T."/>
            <person name="Ishii S."/>
            <person name="Yamamoto J."/>
            <person name="Saito K."/>
            <person name="Kawai Y."/>
            <person name="Isono Y."/>
            <person name="Nakamura Y."/>
            <person name="Nagahari K."/>
            <person name="Murakami K."/>
            <person name="Yasuda T."/>
            <person name="Iwayanagi T."/>
            <person name="Wagatsuma M."/>
            <person name="Shiratori A."/>
            <person name="Sudo H."/>
            <person name="Hosoiri T."/>
            <person name="Kaku Y."/>
            <person name="Kodaira H."/>
            <person name="Kondo H."/>
            <person name="Sugawara M."/>
            <person name="Takahashi M."/>
            <person name="Kanda K."/>
            <person name="Yokoi T."/>
            <person name="Furuya T."/>
            <person name="Kikkawa E."/>
            <person name="Omura Y."/>
            <person name="Abe K."/>
            <person name="Kamihara K."/>
            <person name="Katsuta N."/>
            <person name="Sato K."/>
            <person name="Tanikawa M."/>
            <person name="Yamazaki M."/>
            <person name="Ninomiya K."/>
            <person name="Ishibashi T."/>
            <person name="Yamashita H."/>
            <person name="Murakawa K."/>
            <person name="Fujimori K."/>
            <person name="Tanai H."/>
            <person name="Kimata M."/>
            <person name="Watanabe M."/>
            <person name="Hiraoka S."/>
            <person name="Chiba Y."/>
            <person name="Ishida S."/>
            <person name="Ono Y."/>
            <person name="Takiguchi S."/>
            <person name="Watanabe S."/>
            <person name="Yosida M."/>
            <person name="Hotuta T."/>
            <person name="Kusano J."/>
            <person name="Kanehori K."/>
            <person name="Takahashi-Fujii A."/>
            <person name="Hara H."/>
            <person name="Tanase T.-O."/>
            <person name="Nomura Y."/>
            <person name="Togiya S."/>
            <person name="Komai F."/>
            <person name="Hara R."/>
            <person name="Takeuchi K."/>
            <person name="Arita M."/>
            <person name="Imose N."/>
            <person name="Musashino K."/>
            <person name="Yuuki H."/>
            <person name="Oshima A."/>
            <person name="Sasaki N."/>
            <person name="Aotsuka S."/>
            <person name="Yoshikawa Y."/>
            <person name="Matsunawa H."/>
            <person name="Ichihara T."/>
            <person name="Shiohata N."/>
            <person name="Sano S."/>
            <person name="Moriya S."/>
            <person name="Momiyama H."/>
            <person name="Satoh N."/>
            <person name="Takami S."/>
            <person name="Terashima Y."/>
            <person name="Suzuki O."/>
            <person name="Nakagawa S."/>
            <person name="Senoh A."/>
            <person name="Mizoguchi H."/>
            <person name="Goto Y."/>
            <person name="Shimizu F."/>
            <person name="Wakebe H."/>
            <person name="Hishigaki H."/>
            <person name="Watanabe T."/>
            <person name="Sugiyama A."/>
            <person name="Takemoto M."/>
            <person name="Kawakami B."/>
            <person name="Yamazaki M."/>
            <person name="Watanabe K."/>
            <person name="Kumagai A."/>
            <person name="Itakura S."/>
            <person name="Fukuzumi Y."/>
            <person name="Fujimori Y."/>
            <person name="Komiyama M."/>
            <person name="Tashiro H."/>
            <person name="Tanigami A."/>
            <person name="Fujiwara T."/>
            <person name="Ono T."/>
            <person name="Yamada K."/>
            <person name="Fujii Y."/>
            <person name="Ozaki K."/>
            <person name="Hirao M."/>
            <person name="Ohmori Y."/>
            <person name="Kawabata A."/>
            <person name="Hikiji T."/>
            <person name="Kobatake N."/>
            <person name="Inagaki H."/>
            <person name="Ikema Y."/>
            <person name="Okamoto S."/>
            <person name="Okitani R."/>
            <person name="Kawakami T."/>
            <person name="Noguchi S."/>
            <person name="Itoh T."/>
            <person name="Shigeta K."/>
            <person name="Senba T."/>
            <person name="Matsumura K."/>
            <person name="Nakajima Y."/>
            <person name="Mizuno T."/>
            <person name="Morinaga M."/>
            <person name="Sasaki M."/>
            <person name="Togashi T."/>
            <person name="Oyama M."/>
            <person name="Hata H."/>
            <person name="Watanabe M."/>
            <person name="Komatsu T."/>
            <person name="Mizushima-Sugano J."/>
            <person name="Satoh T."/>
            <person name="Shirai Y."/>
            <person name="Takahashi Y."/>
            <person name="Nakagawa K."/>
            <person name="Okumura K."/>
            <person name="Nagase T."/>
            <person name="Nomura N."/>
            <person name="Kikuchi H."/>
            <person name="Masuho Y."/>
            <person name="Yamashita R."/>
            <person name="Nakai K."/>
            <person name="Yada T."/>
            <person name="Nakamura Y."/>
            <person name="Ohara O."/>
            <person name="Isogai T."/>
            <person name="Sugano S."/>
        </authorList>
    </citation>
    <scope>NUCLEOTIDE SEQUENCE [LARGE SCALE MRNA] OF 801-1617 (ISOFORM 1)</scope>
    <scope>VARIANT SER-1322</scope>
    <source>
        <tissue>Spleen</tissue>
    </source>
</reference>
<reference key="5">
    <citation type="journal article" date="2000" name="Proc. Natl. Acad. Sci. U.S.A.">
        <title>ABCG1 (ABC8), the human homolog of the Drosophila white gene, is a regulator of macrophage cholesterol and phospholipid transport.</title>
        <authorList>
            <person name="Klucken J."/>
            <person name="Buechler C."/>
            <person name="Orso E."/>
            <person name="Kaminski W.E."/>
            <person name="Porsch-Oezcueruemez M."/>
            <person name="Liebisch G."/>
            <person name="Kapinsky M."/>
            <person name="Diederich W."/>
            <person name="Drobnik W."/>
            <person name="Dean M."/>
            <person name="Allikmets R."/>
            <person name="Schmitz G."/>
        </authorList>
    </citation>
    <scope>INDUCTION</scope>
    <scope>FUNCTION</scope>
</reference>
<reference key="6">
    <citation type="journal article" date="2009" name="J. Proteome Res.">
        <title>Glycoproteomics analysis of human liver tissue by combination of multiple enzyme digestion and hydrazide chemistry.</title>
        <authorList>
            <person name="Chen R."/>
            <person name="Jiang X."/>
            <person name="Sun D."/>
            <person name="Han G."/>
            <person name="Wang F."/>
            <person name="Ye M."/>
            <person name="Wang L."/>
            <person name="Zou H."/>
        </authorList>
    </citation>
    <scope>GLYCOSYLATION [LARGE SCALE ANALYSIS] AT ASN-940</scope>
    <source>
        <tissue>Liver</tissue>
    </source>
</reference>
<reference key="7">
    <citation type="journal article" date="2013" name="Int. J. Biochem. Cell Biol.">
        <title>FoxO regulates expression of ABCA6, an intracellular ATP-binding-cassette transporter responsive to cholesterol.</title>
        <authorList>
            <person name="Gai J."/>
            <person name="Ji M."/>
            <person name="Shi C."/>
            <person name="Li W."/>
            <person name="Chen S."/>
            <person name="Wang Y."/>
            <person name="Li H."/>
        </authorList>
    </citation>
    <scope>SUBCELLULAR LOCATION</scope>
    <scope>INDUCTION</scope>
</reference>
<reference key="8">
    <citation type="journal article" date="2014" name="J. Proteomics">
        <title>An enzyme assisted RP-RPLC approach for in-depth analysis of human liver phosphoproteome.</title>
        <authorList>
            <person name="Bian Y."/>
            <person name="Song C."/>
            <person name="Cheng K."/>
            <person name="Dong M."/>
            <person name="Wang F."/>
            <person name="Huang J."/>
            <person name="Sun D."/>
            <person name="Wang L."/>
            <person name="Ye M."/>
            <person name="Zou H."/>
        </authorList>
    </citation>
    <scope>IDENTIFICATION BY MASS SPECTROMETRY [LARGE SCALE ANALYSIS]</scope>
    <source>
        <tissue>Liver</tissue>
    </source>
</reference>